<protein>
    <recommendedName>
        <fullName evidence="1">Small ribosomal subunit protein uS11</fullName>
    </recommendedName>
    <alternativeName>
        <fullName evidence="2">30S ribosomal protein S11</fullName>
    </alternativeName>
</protein>
<proteinExistence type="inferred from homology"/>
<accession>B6YQ62</accession>
<evidence type="ECO:0000255" key="1">
    <source>
        <dbReference type="HAMAP-Rule" id="MF_01310"/>
    </source>
</evidence>
<evidence type="ECO:0000305" key="2"/>
<dbReference type="EMBL" id="AP010656">
    <property type="protein sequence ID" value="BAG83334.1"/>
    <property type="molecule type" value="Genomic_DNA"/>
</dbReference>
<dbReference type="RefSeq" id="WP_012573095.1">
    <property type="nucleotide sequence ID" value="NC_011565.1"/>
</dbReference>
<dbReference type="SMR" id="B6YQ62"/>
<dbReference type="STRING" id="511995.CFPG_071"/>
<dbReference type="KEGG" id="aps:CFPG_071"/>
<dbReference type="eggNOG" id="COG0100">
    <property type="taxonomic scope" value="Bacteria"/>
</dbReference>
<dbReference type="HOGENOM" id="CLU_072439_5_0_10"/>
<dbReference type="OrthoDB" id="9806415at2"/>
<dbReference type="Proteomes" id="UP000000723">
    <property type="component" value="Chromosome"/>
</dbReference>
<dbReference type="GO" id="GO:1990904">
    <property type="term" value="C:ribonucleoprotein complex"/>
    <property type="evidence" value="ECO:0007669"/>
    <property type="project" value="UniProtKB-KW"/>
</dbReference>
<dbReference type="GO" id="GO:0005840">
    <property type="term" value="C:ribosome"/>
    <property type="evidence" value="ECO:0007669"/>
    <property type="project" value="UniProtKB-KW"/>
</dbReference>
<dbReference type="GO" id="GO:0019843">
    <property type="term" value="F:rRNA binding"/>
    <property type="evidence" value="ECO:0007669"/>
    <property type="project" value="UniProtKB-UniRule"/>
</dbReference>
<dbReference type="GO" id="GO:0003735">
    <property type="term" value="F:structural constituent of ribosome"/>
    <property type="evidence" value="ECO:0007669"/>
    <property type="project" value="InterPro"/>
</dbReference>
<dbReference type="GO" id="GO:0006412">
    <property type="term" value="P:translation"/>
    <property type="evidence" value="ECO:0007669"/>
    <property type="project" value="UniProtKB-UniRule"/>
</dbReference>
<dbReference type="FunFam" id="3.30.420.80:FF:000004">
    <property type="entry name" value="30S ribosomal protein S11"/>
    <property type="match status" value="1"/>
</dbReference>
<dbReference type="Gene3D" id="3.30.420.80">
    <property type="entry name" value="Ribosomal protein S11"/>
    <property type="match status" value="1"/>
</dbReference>
<dbReference type="HAMAP" id="MF_01310">
    <property type="entry name" value="Ribosomal_uS11"/>
    <property type="match status" value="1"/>
</dbReference>
<dbReference type="InterPro" id="IPR001971">
    <property type="entry name" value="Ribosomal_uS11"/>
</dbReference>
<dbReference type="InterPro" id="IPR019981">
    <property type="entry name" value="Ribosomal_uS11_bac-type"/>
</dbReference>
<dbReference type="InterPro" id="IPR036967">
    <property type="entry name" value="Ribosomal_uS11_sf"/>
</dbReference>
<dbReference type="NCBIfam" id="NF003698">
    <property type="entry name" value="PRK05309.1"/>
    <property type="match status" value="1"/>
</dbReference>
<dbReference type="NCBIfam" id="TIGR03632">
    <property type="entry name" value="uS11_bact"/>
    <property type="match status" value="1"/>
</dbReference>
<dbReference type="PANTHER" id="PTHR11759">
    <property type="entry name" value="40S RIBOSOMAL PROTEIN S14/30S RIBOSOMAL PROTEIN S11"/>
    <property type="match status" value="1"/>
</dbReference>
<dbReference type="Pfam" id="PF00411">
    <property type="entry name" value="Ribosomal_S11"/>
    <property type="match status" value="1"/>
</dbReference>
<dbReference type="PIRSF" id="PIRSF002131">
    <property type="entry name" value="Ribosomal_S11"/>
    <property type="match status" value="1"/>
</dbReference>
<dbReference type="SUPFAM" id="SSF53137">
    <property type="entry name" value="Translational machinery components"/>
    <property type="match status" value="1"/>
</dbReference>
<organism>
    <name type="scientific">Azobacteroides pseudotrichonymphae genomovar. CFP2</name>
    <dbReference type="NCBI Taxonomy" id="511995"/>
    <lineage>
        <taxon>Bacteria</taxon>
        <taxon>Pseudomonadati</taxon>
        <taxon>Bacteroidota</taxon>
        <taxon>Bacteroidia</taxon>
        <taxon>Bacteroidales</taxon>
        <taxon>Candidatus Azobacteroides</taxon>
    </lineage>
</organism>
<sequence length="129" mass="14131">MAKRTVATKKRVVKVDVKGQLHIHSSFNNIIVTITNDEGQVISWSSSGKMGFRSSKKNTPYAAQMAAQDCAKVAYDLGMRKVKAYVKGPGNGRESAIRMVHNVGIEVTEIIDVTPLPHNGCRPPKGRRV</sequence>
<gene>
    <name evidence="1" type="primary">rpsK</name>
    <name type="ordered locus">CFPG_071</name>
</gene>
<comment type="function">
    <text evidence="1">Located on the platform of the 30S subunit, it bridges several disparate RNA helices of the 16S rRNA. Forms part of the Shine-Dalgarno cleft in the 70S ribosome.</text>
</comment>
<comment type="subunit">
    <text evidence="1">Part of the 30S ribosomal subunit. Interacts with proteins S7 and S18. Binds to IF-3.</text>
</comment>
<comment type="similarity">
    <text evidence="1">Belongs to the universal ribosomal protein uS11 family.</text>
</comment>
<name>RS11_AZOPC</name>
<reference key="1">
    <citation type="journal article" date="2008" name="Science">
        <title>Genome of an endosymbiont coupling N2 fixation to cellulolysis within RT protist cells in termite gut.</title>
        <authorList>
            <person name="Hongoh Y."/>
            <person name="Sharma V.K."/>
            <person name="Prakash T."/>
            <person name="Noda S."/>
            <person name="Toh H."/>
            <person name="Taylor T.D."/>
            <person name="Kudo T."/>
            <person name="Sakaki Y."/>
            <person name="Toyoda A."/>
            <person name="Hattori M."/>
            <person name="Ohkuma M."/>
        </authorList>
    </citation>
    <scope>NUCLEOTIDE SEQUENCE [LARGE SCALE GENOMIC DNA]</scope>
</reference>
<feature type="chain" id="PRO_1000141050" description="Small ribosomal subunit protein uS11">
    <location>
        <begin position="1"/>
        <end position="129"/>
    </location>
</feature>
<keyword id="KW-1185">Reference proteome</keyword>
<keyword id="KW-0687">Ribonucleoprotein</keyword>
<keyword id="KW-0689">Ribosomal protein</keyword>
<keyword id="KW-0694">RNA-binding</keyword>
<keyword id="KW-0699">rRNA-binding</keyword>